<sequence>MPASLLELKKRIASVKQTSKITEAMHMVSAAKLNQTEKRDKGYQEYNRLLHQTVSRLMSASVINHLNKANYRLTQDNIDSIDYDDVFGMGIISDMIKPREEVHSVGYLVVTGDRGLVGSYNSSVIKQMMSLVADDKLQGRESKILSVGSVGSQFFKKNNLNVVYEKDGVSDVPTFKETLPIVSTAIKMYLNGVYDELYVCYTHHVNSLSSAFRAEKMLPIVDLDIGTMEAKESKKIEFEVAPDIDSVLATLLPQFARAEIYGAILDAKTAEHASSMTAMKSATDNAKDLVSSLSLQMNRARQAQITTELTEIVSGANALE</sequence>
<feature type="chain" id="PRO_1000053235" description="ATP synthase gamma chain">
    <location>
        <begin position="1"/>
        <end position="320"/>
    </location>
</feature>
<gene>
    <name evidence="1" type="primary">atpG</name>
    <name type="ordered locus">Ldb0710</name>
</gene>
<accession>Q1GAW6</accession>
<organism>
    <name type="scientific">Lactobacillus delbrueckii subsp. bulgaricus (strain ATCC 11842 / DSM 20081 / BCRC 10696 / JCM 1002 / NBRC 13953 / NCIMB 11778 / NCTC 12712 / WDCM 00102 / Lb 14)</name>
    <dbReference type="NCBI Taxonomy" id="390333"/>
    <lineage>
        <taxon>Bacteria</taxon>
        <taxon>Bacillati</taxon>
        <taxon>Bacillota</taxon>
        <taxon>Bacilli</taxon>
        <taxon>Lactobacillales</taxon>
        <taxon>Lactobacillaceae</taxon>
        <taxon>Lactobacillus</taxon>
    </lineage>
</organism>
<protein>
    <recommendedName>
        <fullName evidence="1">ATP synthase gamma chain</fullName>
    </recommendedName>
    <alternativeName>
        <fullName evidence="1">ATP synthase F1 sector gamma subunit</fullName>
    </alternativeName>
    <alternativeName>
        <fullName evidence="1">F-ATPase gamma subunit</fullName>
    </alternativeName>
</protein>
<evidence type="ECO:0000255" key="1">
    <source>
        <dbReference type="HAMAP-Rule" id="MF_00815"/>
    </source>
</evidence>
<proteinExistence type="inferred from homology"/>
<comment type="function">
    <text evidence="1">Produces ATP from ADP in the presence of a proton gradient across the membrane. The gamma chain is believed to be important in regulating ATPase activity and the flow of protons through the CF(0) complex.</text>
</comment>
<comment type="subunit">
    <text evidence="1">F-type ATPases have 2 components, CF(1) - the catalytic core - and CF(0) - the membrane proton channel. CF(1) has five subunits: alpha(3), beta(3), gamma(1), delta(1), epsilon(1). CF(0) has three main subunits: a, b and c.</text>
</comment>
<comment type="subcellular location">
    <subcellularLocation>
        <location evidence="1">Cell membrane</location>
        <topology evidence="1">Peripheral membrane protein</topology>
    </subcellularLocation>
</comment>
<comment type="similarity">
    <text evidence="1">Belongs to the ATPase gamma chain family.</text>
</comment>
<dbReference type="EMBL" id="CR954253">
    <property type="protein sequence ID" value="CAI97537.1"/>
    <property type="molecule type" value="Genomic_DNA"/>
</dbReference>
<dbReference type="RefSeq" id="WP_003623498.1">
    <property type="nucleotide sequence ID" value="NZ_JQAV01000001.1"/>
</dbReference>
<dbReference type="SMR" id="Q1GAW6"/>
<dbReference type="STRING" id="390333.Ldb0710"/>
<dbReference type="KEGG" id="ldb:Ldb0710"/>
<dbReference type="PATRIC" id="fig|390333.13.peg.91"/>
<dbReference type="eggNOG" id="COG0224">
    <property type="taxonomic scope" value="Bacteria"/>
</dbReference>
<dbReference type="HOGENOM" id="CLU_050669_0_1_9"/>
<dbReference type="BioCyc" id="LDEL390333:LDB_RS03090-MONOMER"/>
<dbReference type="Proteomes" id="UP000001259">
    <property type="component" value="Chromosome"/>
</dbReference>
<dbReference type="GO" id="GO:0005886">
    <property type="term" value="C:plasma membrane"/>
    <property type="evidence" value="ECO:0007669"/>
    <property type="project" value="UniProtKB-SubCell"/>
</dbReference>
<dbReference type="GO" id="GO:0045259">
    <property type="term" value="C:proton-transporting ATP synthase complex"/>
    <property type="evidence" value="ECO:0007669"/>
    <property type="project" value="UniProtKB-KW"/>
</dbReference>
<dbReference type="GO" id="GO:0005524">
    <property type="term" value="F:ATP binding"/>
    <property type="evidence" value="ECO:0007669"/>
    <property type="project" value="UniProtKB-UniRule"/>
</dbReference>
<dbReference type="GO" id="GO:0046933">
    <property type="term" value="F:proton-transporting ATP synthase activity, rotational mechanism"/>
    <property type="evidence" value="ECO:0007669"/>
    <property type="project" value="UniProtKB-UniRule"/>
</dbReference>
<dbReference type="GO" id="GO:0042777">
    <property type="term" value="P:proton motive force-driven plasma membrane ATP synthesis"/>
    <property type="evidence" value="ECO:0007669"/>
    <property type="project" value="UniProtKB-UniRule"/>
</dbReference>
<dbReference type="CDD" id="cd12151">
    <property type="entry name" value="F1-ATPase_gamma"/>
    <property type="match status" value="1"/>
</dbReference>
<dbReference type="Gene3D" id="3.40.1380.10">
    <property type="match status" value="1"/>
</dbReference>
<dbReference type="Gene3D" id="1.10.287.80">
    <property type="entry name" value="ATP synthase, gamma subunit, helix hairpin domain"/>
    <property type="match status" value="2"/>
</dbReference>
<dbReference type="HAMAP" id="MF_00815">
    <property type="entry name" value="ATP_synth_gamma_bact"/>
    <property type="match status" value="1"/>
</dbReference>
<dbReference type="InterPro" id="IPR035968">
    <property type="entry name" value="ATP_synth_F1_ATPase_gsu"/>
</dbReference>
<dbReference type="InterPro" id="IPR000131">
    <property type="entry name" value="ATP_synth_F1_gsu"/>
</dbReference>
<dbReference type="InterPro" id="IPR023632">
    <property type="entry name" value="ATP_synth_F1_gsu_CS"/>
</dbReference>
<dbReference type="NCBIfam" id="TIGR01146">
    <property type="entry name" value="ATPsyn_F1gamma"/>
    <property type="match status" value="1"/>
</dbReference>
<dbReference type="NCBIfam" id="NF004147">
    <property type="entry name" value="PRK05621.2-1"/>
    <property type="match status" value="1"/>
</dbReference>
<dbReference type="PANTHER" id="PTHR11693">
    <property type="entry name" value="ATP SYNTHASE GAMMA CHAIN"/>
    <property type="match status" value="1"/>
</dbReference>
<dbReference type="PANTHER" id="PTHR11693:SF22">
    <property type="entry name" value="ATP SYNTHASE SUBUNIT GAMMA, MITOCHONDRIAL"/>
    <property type="match status" value="1"/>
</dbReference>
<dbReference type="Pfam" id="PF00231">
    <property type="entry name" value="ATP-synt"/>
    <property type="match status" value="1"/>
</dbReference>
<dbReference type="PRINTS" id="PR00126">
    <property type="entry name" value="ATPASEGAMMA"/>
</dbReference>
<dbReference type="SUPFAM" id="SSF52943">
    <property type="entry name" value="ATP synthase (F1-ATPase), gamma subunit"/>
    <property type="match status" value="1"/>
</dbReference>
<dbReference type="PROSITE" id="PS00153">
    <property type="entry name" value="ATPASE_GAMMA"/>
    <property type="match status" value="1"/>
</dbReference>
<keyword id="KW-0066">ATP synthesis</keyword>
<keyword id="KW-1003">Cell membrane</keyword>
<keyword id="KW-0139">CF(1)</keyword>
<keyword id="KW-0375">Hydrogen ion transport</keyword>
<keyword id="KW-0406">Ion transport</keyword>
<keyword id="KW-0472">Membrane</keyword>
<keyword id="KW-1185">Reference proteome</keyword>
<keyword id="KW-0813">Transport</keyword>
<reference key="1">
    <citation type="journal article" date="2006" name="Proc. Natl. Acad. Sci. U.S.A.">
        <title>The complete genome sequence of Lactobacillus bulgaricus reveals extensive and ongoing reductive evolution.</title>
        <authorList>
            <person name="van de Guchte M."/>
            <person name="Penaud S."/>
            <person name="Grimaldi C."/>
            <person name="Barbe V."/>
            <person name="Bryson K."/>
            <person name="Nicolas P."/>
            <person name="Robert C."/>
            <person name="Oztas S."/>
            <person name="Mangenot S."/>
            <person name="Couloux A."/>
            <person name="Loux V."/>
            <person name="Dervyn R."/>
            <person name="Bossy R."/>
            <person name="Bolotin A."/>
            <person name="Batto J.-M."/>
            <person name="Walunas T."/>
            <person name="Gibrat J.-F."/>
            <person name="Bessieres P."/>
            <person name="Weissenbach J."/>
            <person name="Ehrlich S.D."/>
            <person name="Maguin E."/>
        </authorList>
    </citation>
    <scope>NUCLEOTIDE SEQUENCE [LARGE SCALE GENOMIC DNA]</scope>
    <source>
        <strain>ATCC 11842 / DSM 20081 / BCRC 10696 / JCM 1002 / NBRC 13953 / NCIMB 11778 / NCTC 12712 / WDCM 00102 / Lb 14</strain>
    </source>
</reference>
<name>ATPG_LACDA</name>